<comment type="function">
    <text evidence="1">Involved in the heme biosynthesis. Catalyzes the aerobic oxidative decarboxylation of propionate groups of rings A and B of coproporphyrinogen-III to yield the vinyl groups in protoporphyrinogen-IX.</text>
</comment>
<comment type="catalytic activity">
    <reaction evidence="1">
        <text>coproporphyrinogen III + O2 + 2 H(+) = protoporphyrinogen IX + 2 CO2 + 2 H2O</text>
        <dbReference type="Rhea" id="RHEA:18257"/>
        <dbReference type="ChEBI" id="CHEBI:15377"/>
        <dbReference type="ChEBI" id="CHEBI:15378"/>
        <dbReference type="ChEBI" id="CHEBI:15379"/>
        <dbReference type="ChEBI" id="CHEBI:16526"/>
        <dbReference type="ChEBI" id="CHEBI:57307"/>
        <dbReference type="ChEBI" id="CHEBI:57309"/>
        <dbReference type="EC" id="1.3.3.3"/>
    </reaction>
</comment>
<comment type="cofactor">
    <cofactor evidence="1">
        <name>Mn(2+)</name>
        <dbReference type="ChEBI" id="CHEBI:29035"/>
    </cofactor>
</comment>
<comment type="pathway">
    <text evidence="1">Porphyrin-containing compound metabolism; protoporphyrin-IX biosynthesis; protoporphyrinogen-IX from coproporphyrinogen-III (O2 route): step 1/1.</text>
</comment>
<comment type="subunit">
    <text evidence="1">Homodimer.</text>
</comment>
<comment type="subcellular location">
    <subcellularLocation>
        <location evidence="1">Cytoplasm</location>
    </subcellularLocation>
</comment>
<comment type="similarity">
    <text evidence="1">Belongs to the aerobic coproporphyrinogen-III oxidase family.</text>
</comment>
<dbReference type="EC" id="1.3.3.3" evidence="1"/>
<dbReference type="EMBL" id="CP001164">
    <property type="protein sequence ID" value="ACI34711.1"/>
    <property type="molecule type" value="Genomic_DNA"/>
</dbReference>
<dbReference type="RefSeq" id="WP_000801382.1">
    <property type="nucleotide sequence ID" value="NC_011353.1"/>
</dbReference>
<dbReference type="SMR" id="B5YZY1"/>
<dbReference type="KEGG" id="ecf:ECH74115_3666"/>
<dbReference type="HOGENOM" id="CLU_026169_0_1_6"/>
<dbReference type="UniPathway" id="UPA00251">
    <property type="reaction ID" value="UER00322"/>
</dbReference>
<dbReference type="GO" id="GO:0005737">
    <property type="term" value="C:cytoplasm"/>
    <property type="evidence" value="ECO:0007669"/>
    <property type="project" value="UniProtKB-SubCell"/>
</dbReference>
<dbReference type="GO" id="GO:0004109">
    <property type="term" value="F:coproporphyrinogen oxidase activity"/>
    <property type="evidence" value="ECO:0007669"/>
    <property type="project" value="UniProtKB-UniRule"/>
</dbReference>
<dbReference type="GO" id="GO:0030145">
    <property type="term" value="F:manganese ion binding"/>
    <property type="evidence" value="ECO:0007669"/>
    <property type="project" value="UniProtKB-UniRule"/>
</dbReference>
<dbReference type="GO" id="GO:0042803">
    <property type="term" value="F:protein homodimerization activity"/>
    <property type="evidence" value="ECO:0000250"/>
    <property type="project" value="UniProtKB"/>
</dbReference>
<dbReference type="GO" id="GO:0006782">
    <property type="term" value="P:protoporphyrinogen IX biosynthetic process"/>
    <property type="evidence" value="ECO:0007669"/>
    <property type="project" value="UniProtKB-UniRule"/>
</dbReference>
<dbReference type="FunFam" id="3.40.1500.10:FF:000001">
    <property type="entry name" value="Oxygen-dependent coproporphyrinogen-III oxidase"/>
    <property type="match status" value="1"/>
</dbReference>
<dbReference type="Gene3D" id="3.40.1500.10">
    <property type="entry name" value="Coproporphyrinogen III oxidase, aerobic"/>
    <property type="match status" value="1"/>
</dbReference>
<dbReference type="HAMAP" id="MF_00333">
    <property type="entry name" value="Coprogen_oxidas"/>
    <property type="match status" value="1"/>
</dbReference>
<dbReference type="InterPro" id="IPR001260">
    <property type="entry name" value="Coprogen_oxidase_aer"/>
</dbReference>
<dbReference type="InterPro" id="IPR036406">
    <property type="entry name" value="Coprogen_oxidase_aer_sf"/>
</dbReference>
<dbReference type="InterPro" id="IPR018375">
    <property type="entry name" value="Coprogen_oxidase_CS"/>
</dbReference>
<dbReference type="NCBIfam" id="NF003727">
    <property type="entry name" value="PRK05330.1"/>
    <property type="match status" value="1"/>
</dbReference>
<dbReference type="PANTHER" id="PTHR10755">
    <property type="entry name" value="COPROPORPHYRINOGEN III OXIDASE, MITOCHONDRIAL"/>
    <property type="match status" value="1"/>
</dbReference>
<dbReference type="PANTHER" id="PTHR10755:SF0">
    <property type="entry name" value="OXYGEN-DEPENDENT COPROPORPHYRINOGEN-III OXIDASE, MITOCHONDRIAL"/>
    <property type="match status" value="1"/>
</dbReference>
<dbReference type="Pfam" id="PF01218">
    <property type="entry name" value="Coprogen_oxidas"/>
    <property type="match status" value="1"/>
</dbReference>
<dbReference type="PIRSF" id="PIRSF000166">
    <property type="entry name" value="Coproporphyri_ox"/>
    <property type="match status" value="1"/>
</dbReference>
<dbReference type="PRINTS" id="PR00073">
    <property type="entry name" value="COPRGNOXDASE"/>
</dbReference>
<dbReference type="SUPFAM" id="SSF102886">
    <property type="entry name" value="Coproporphyrinogen III oxidase"/>
    <property type="match status" value="1"/>
</dbReference>
<dbReference type="PROSITE" id="PS01021">
    <property type="entry name" value="COPROGEN_OXIDASE"/>
    <property type="match status" value="1"/>
</dbReference>
<proteinExistence type="inferred from homology"/>
<reference key="1">
    <citation type="journal article" date="2011" name="Proc. Natl. Acad. Sci. U.S.A.">
        <title>Genomic anatomy of Escherichia coli O157:H7 outbreaks.</title>
        <authorList>
            <person name="Eppinger M."/>
            <person name="Mammel M.K."/>
            <person name="Leclerc J.E."/>
            <person name="Ravel J."/>
            <person name="Cebula T.A."/>
        </authorList>
    </citation>
    <scope>NUCLEOTIDE SEQUENCE [LARGE SCALE GENOMIC DNA]</scope>
    <source>
        <strain>EC4115 / EHEC</strain>
    </source>
</reference>
<feature type="chain" id="PRO_1000119796" description="Oxygen-dependent coproporphyrinogen-III oxidase">
    <location>
        <begin position="1"/>
        <end position="299"/>
    </location>
</feature>
<feature type="region of interest" description="Important for dimerization" evidence="1">
    <location>
        <begin position="240"/>
        <end position="275"/>
    </location>
</feature>
<feature type="active site" description="Proton donor" evidence="1">
    <location>
        <position position="106"/>
    </location>
</feature>
<feature type="binding site" evidence="1">
    <location>
        <position position="92"/>
    </location>
    <ligand>
        <name>substrate</name>
    </ligand>
</feature>
<feature type="binding site" evidence="1">
    <location>
        <position position="96"/>
    </location>
    <ligand>
        <name>Mn(2+)</name>
        <dbReference type="ChEBI" id="CHEBI:29035"/>
    </ligand>
</feature>
<feature type="binding site" evidence="1">
    <location>
        <position position="106"/>
    </location>
    <ligand>
        <name>Mn(2+)</name>
        <dbReference type="ChEBI" id="CHEBI:29035"/>
    </ligand>
</feature>
<feature type="binding site" evidence="1">
    <location>
        <begin position="108"/>
        <end position="110"/>
    </location>
    <ligand>
        <name>substrate</name>
    </ligand>
</feature>
<feature type="binding site" evidence="1">
    <location>
        <position position="145"/>
    </location>
    <ligand>
        <name>Mn(2+)</name>
        <dbReference type="ChEBI" id="CHEBI:29035"/>
    </ligand>
</feature>
<feature type="binding site" evidence="1">
    <location>
        <position position="175"/>
    </location>
    <ligand>
        <name>Mn(2+)</name>
        <dbReference type="ChEBI" id="CHEBI:29035"/>
    </ligand>
</feature>
<feature type="binding site" evidence="1">
    <location>
        <begin position="258"/>
        <end position="260"/>
    </location>
    <ligand>
        <name>substrate</name>
    </ligand>
</feature>
<feature type="site" description="Important for dimerization" evidence="1">
    <location>
        <position position="175"/>
    </location>
</feature>
<gene>
    <name evidence="1" type="primary">hemF</name>
    <name type="ordered locus">ECH74115_3666</name>
</gene>
<organism>
    <name type="scientific">Escherichia coli O157:H7 (strain EC4115 / EHEC)</name>
    <dbReference type="NCBI Taxonomy" id="444450"/>
    <lineage>
        <taxon>Bacteria</taxon>
        <taxon>Pseudomonadati</taxon>
        <taxon>Pseudomonadota</taxon>
        <taxon>Gammaproteobacteria</taxon>
        <taxon>Enterobacterales</taxon>
        <taxon>Enterobacteriaceae</taxon>
        <taxon>Escherichia</taxon>
    </lineage>
</organism>
<evidence type="ECO:0000255" key="1">
    <source>
        <dbReference type="HAMAP-Rule" id="MF_00333"/>
    </source>
</evidence>
<keyword id="KW-0963">Cytoplasm</keyword>
<keyword id="KW-0350">Heme biosynthesis</keyword>
<keyword id="KW-0464">Manganese</keyword>
<keyword id="KW-0479">Metal-binding</keyword>
<keyword id="KW-0560">Oxidoreductase</keyword>
<keyword id="KW-0627">Porphyrin biosynthesis</keyword>
<accession>B5YZY1</accession>
<name>HEM6_ECO5E</name>
<sequence>MKPDAHQVKQFLLNLQDTICQQLTAVDGAEFVEDSWQREGGGGGRSRVLRNGGVFEQAGVNFSHVHGEAMPASATAHRPELAGRSFEAMGVSLVVHPHNPYVPTSHANVRFFIAEKPGAEPVWWFGGGFDLTPFYGFEEDAIHWHRTARDLCLPFGKDVYPRYKKWCDDYFYLKHRNEQRGIGGLFFDDLNTPDFDHCFAFMQAVGKGYTDAYLPIVERRKAMAYGERERNFQLYRRGRYVEFNLVWDRGTLFGLQTGGRTESILMSMPPLVRWEYDYQPKDGSPEAALSEFIKVRDWV</sequence>
<protein>
    <recommendedName>
        <fullName evidence="1">Oxygen-dependent coproporphyrinogen-III oxidase</fullName>
        <shortName evidence="1">CPO</shortName>
        <shortName evidence="1">Coprogen oxidase</shortName>
        <shortName evidence="1">Coproporphyrinogenase</shortName>
        <ecNumber evidence="1">1.3.3.3</ecNumber>
    </recommendedName>
</protein>